<comment type="function">
    <text evidence="1">The RuvA-RuvB-RuvC complex processes Holliday junction (HJ) DNA during genetic recombination and DNA repair, while the RuvA-RuvB complex plays an important role in the rescue of blocked DNA replication forks via replication fork reversal (RFR). RuvA specifically binds to HJ cruciform DNA, conferring on it an open structure. The RuvB hexamer acts as an ATP-dependent pump, pulling dsDNA into and through the RuvAB complex. HJ branch migration allows RuvC to scan DNA until it finds its consensus sequence, where it cleaves and resolves the cruciform DNA.</text>
</comment>
<comment type="subunit">
    <text evidence="1">Homotetramer. Forms an RuvA(8)-RuvB(12)-Holliday junction (HJ) complex. HJ DNA is sandwiched between 2 RuvA tetramers; dsDNA enters through RuvA and exits via RuvB. An RuvB hexamer assembles on each DNA strand where it exits the tetramer. Each RuvB hexamer is contacted by two RuvA subunits (via domain III) on 2 adjacent RuvB subunits; this complex drives branch migration. In the full resolvosome a probable DNA-RuvA(4)-RuvB(12)-RuvC(2) complex forms which resolves the HJ.</text>
</comment>
<comment type="subcellular location">
    <subcellularLocation>
        <location evidence="1">Cytoplasm</location>
    </subcellularLocation>
</comment>
<comment type="domain">
    <text evidence="1">Has three domains with a flexible linker between the domains II and III and assumes an 'L' shape. Domain III is highly mobile and contacts RuvB.</text>
</comment>
<comment type="similarity">
    <text evidence="1">Belongs to the RuvA family.</text>
</comment>
<dbReference type="EMBL" id="CP001124">
    <property type="protein sequence ID" value="ACH40311.1"/>
    <property type="molecule type" value="Genomic_DNA"/>
</dbReference>
<dbReference type="RefSeq" id="WP_012531744.1">
    <property type="nucleotide sequence ID" value="NC_011146.1"/>
</dbReference>
<dbReference type="SMR" id="B5EAH2"/>
<dbReference type="STRING" id="404380.Gbem_3315"/>
<dbReference type="KEGG" id="gbm:Gbem_3315"/>
<dbReference type="eggNOG" id="COG0632">
    <property type="taxonomic scope" value="Bacteria"/>
</dbReference>
<dbReference type="HOGENOM" id="CLU_087936_0_0_7"/>
<dbReference type="OrthoDB" id="5293449at2"/>
<dbReference type="Proteomes" id="UP000008825">
    <property type="component" value="Chromosome"/>
</dbReference>
<dbReference type="GO" id="GO:0005737">
    <property type="term" value="C:cytoplasm"/>
    <property type="evidence" value="ECO:0007669"/>
    <property type="project" value="UniProtKB-SubCell"/>
</dbReference>
<dbReference type="GO" id="GO:0009379">
    <property type="term" value="C:Holliday junction helicase complex"/>
    <property type="evidence" value="ECO:0007669"/>
    <property type="project" value="InterPro"/>
</dbReference>
<dbReference type="GO" id="GO:0048476">
    <property type="term" value="C:Holliday junction resolvase complex"/>
    <property type="evidence" value="ECO:0007669"/>
    <property type="project" value="UniProtKB-UniRule"/>
</dbReference>
<dbReference type="GO" id="GO:0005524">
    <property type="term" value="F:ATP binding"/>
    <property type="evidence" value="ECO:0007669"/>
    <property type="project" value="InterPro"/>
</dbReference>
<dbReference type="GO" id="GO:0000400">
    <property type="term" value="F:four-way junction DNA binding"/>
    <property type="evidence" value="ECO:0007669"/>
    <property type="project" value="UniProtKB-UniRule"/>
</dbReference>
<dbReference type="GO" id="GO:0009378">
    <property type="term" value="F:four-way junction helicase activity"/>
    <property type="evidence" value="ECO:0007669"/>
    <property type="project" value="InterPro"/>
</dbReference>
<dbReference type="GO" id="GO:0006310">
    <property type="term" value="P:DNA recombination"/>
    <property type="evidence" value="ECO:0007669"/>
    <property type="project" value="UniProtKB-UniRule"/>
</dbReference>
<dbReference type="GO" id="GO:0006281">
    <property type="term" value="P:DNA repair"/>
    <property type="evidence" value="ECO:0007669"/>
    <property type="project" value="UniProtKB-UniRule"/>
</dbReference>
<dbReference type="CDD" id="cd14332">
    <property type="entry name" value="UBA_RuvA_C"/>
    <property type="match status" value="1"/>
</dbReference>
<dbReference type="Gene3D" id="1.10.150.20">
    <property type="entry name" value="5' to 3' exonuclease, C-terminal subdomain"/>
    <property type="match status" value="1"/>
</dbReference>
<dbReference type="Gene3D" id="1.10.8.10">
    <property type="entry name" value="DNA helicase RuvA subunit, C-terminal domain"/>
    <property type="match status" value="1"/>
</dbReference>
<dbReference type="Gene3D" id="2.40.50.140">
    <property type="entry name" value="Nucleic acid-binding proteins"/>
    <property type="match status" value="1"/>
</dbReference>
<dbReference type="HAMAP" id="MF_00031">
    <property type="entry name" value="DNA_HJ_migration_RuvA"/>
    <property type="match status" value="1"/>
</dbReference>
<dbReference type="InterPro" id="IPR013849">
    <property type="entry name" value="DNA_helicase_Holl-junc_RuvA_I"/>
</dbReference>
<dbReference type="InterPro" id="IPR003583">
    <property type="entry name" value="Hlx-hairpin-Hlx_DNA-bd_motif"/>
</dbReference>
<dbReference type="InterPro" id="IPR012340">
    <property type="entry name" value="NA-bd_OB-fold"/>
</dbReference>
<dbReference type="InterPro" id="IPR000085">
    <property type="entry name" value="RuvA"/>
</dbReference>
<dbReference type="InterPro" id="IPR010994">
    <property type="entry name" value="RuvA_2-like"/>
</dbReference>
<dbReference type="InterPro" id="IPR011114">
    <property type="entry name" value="RuvA_C"/>
</dbReference>
<dbReference type="InterPro" id="IPR036267">
    <property type="entry name" value="RuvA_C_sf"/>
</dbReference>
<dbReference type="NCBIfam" id="TIGR00084">
    <property type="entry name" value="ruvA"/>
    <property type="match status" value="1"/>
</dbReference>
<dbReference type="Pfam" id="PF14520">
    <property type="entry name" value="HHH_5"/>
    <property type="match status" value="1"/>
</dbReference>
<dbReference type="Pfam" id="PF07499">
    <property type="entry name" value="RuvA_C"/>
    <property type="match status" value="1"/>
</dbReference>
<dbReference type="Pfam" id="PF01330">
    <property type="entry name" value="RuvA_N"/>
    <property type="match status" value="1"/>
</dbReference>
<dbReference type="SMART" id="SM00278">
    <property type="entry name" value="HhH1"/>
    <property type="match status" value="2"/>
</dbReference>
<dbReference type="SUPFAM" id="SSF46929">
    <property type="entry name" value="DNA helicase RuvA subunit, C-terminal domain"/>
    <property type="match status" value="1"/>
</dbReference>
<dbReference type="SUPFAM" id="SSF50249">
    <property type="entry name" value="Nucleic acid-binding proteins"/>
    <property type="match status" value="1"/>
</dbReference>
<dbReference type="SUPFAM" id="SSF47781">
    <property type="entry name" value="RuvA domain 2-like"/>
    <property type="match status" value="1"/>
</dbReference>
<keyword id="KW-0963">Cytoplasm</keyword>
<keyword id="KW-0227">DNA damage</keyword>
<keyword id="KW-0233">DNA recombination</keyword>
<keyword id="KW-0234">DNA repair</keyword>
<keyword id="KW-0238">DNA-binding</keyword>
<keyword id="KW-1185">Reference proteome</keyword>
<gene>
    <name evidence="1" type="primary">ruvA</name>
    <name type="ordered locus">Gbem_3315</name>
</gene>
<evidence type="ECO:0000255" key="1">
    <source>
        <dbReference type="HAMAP-Rule" id="MF_00031"/>
    </source>
</evidence>
<feature type="chain" id="PRO_1000090320" description="Holliday junction branch migration complex subunit RuvA">
    <location>
        <begin position="1"/>
        <end position="199"/>
    </location>
</feature>
<feature type="region of interest" description="Domain I" evidence="1">
    <location>
        <begin position="1"/>
        <end position="64"/>
    </location>
</feature>
<feature type="region of interest" description="Domain II" evidence="1">
    <location>
        <begin position="65"/>
        <end position="143"/>
    </location>
</feature>
<feature type="region of interest" description="Flexible linker" evidence="1">
    <location>
        <begin position="144"/>
        <end position="148"/>
    </location>
</feature>
<feature type="region of interest" description="Domain III" evidence="1">
    <location>
        <begin position="149"/>
        <end position="199"/>
    </location>
</feature>
<accession>B5EAH2</accession>
<name>RUVA_CITBB</name>
<reference key="1">
    <citation type="submission" date="2008-07" db="EMBL/GenBank/DDBJ databases">
        <title>Complete sequence of Geobacter bemidjiensis BEM.</title>
        <authorList>
            <consortium name="US DOE Joint Genome Institute"/>
            <person name="Lucas S."/>
            <person name="Copeland A."/>
            <person name="Lapidus A."/>
            <person name="Glavina del Rio T."/>
            <person name="Dalin E."/>
            <person name="Tice H."/>
            <person name="Bruce D."/>
            <person name="Goodwin L."/>
            <person name="Pitluck S."/>
            <person name="Kiss H."/>
            <person name="Brettin T."/>
            <person name="Detter J.C."/>
            <person name="Han C."/>
            <person name="Kuske C.R."/>
            <person name="Schmutz J."/>
            <person name="Larimer F."/>
            <person name="Land M."/>
            <person name="Hauser L."/>
            <person name="Kyrpides N."/>
            <person name="Lykidis A."/>
            <person name="Lovley D."/>
            <person name="Richardson P."/>
        </authorList>
    </citation>
    <scope>NUCLEOTIDE SEQUENCE [LARGE SCALE GENOMIC DNA]</scope>
    <source>
        <strain>ATCC BAA-1014 / DSM 16622 / JCM 12645 / Bem</strain>
    </source>
</reference>
<protein>
    <recommendedName>
        <fullName evidence="1">Holliday junction branch migration complex subunit RuvA</fullName>
    </recommendedName>
</protein>
<proteinExistence type="inferred from homology"/>
<sequence>MIALLTGKLAYKSPEFIILDVNGVGYQVHIPFSTYYTLPVEGGALSLQIHTSVKEDAINLYGFRTQQEKELFQLLIGVSGVGPKLATGILSNSEPSELADSLVNGNLARLSAIPGIGKKTAERLVLELKEKMKKLGLAQPQAGGTTAPAKQEIRDDVLSALINLGYKEAVVQKALAELKVTEDATVELVLKQALKILMK</sequence>
<organism>
    <name type="scientific">Citrifermentans bemidjiense (strain ATCC BAA-1014 / DSM 16622 / JCM 12645 / Bem)</name>
    <name type="common">Geobacter bemidjiensis</name>
    <dbReference type="NCBI Taxonomy" id="404380"/>
    <lineage>
        <taxon>Bacteria</taxon>
        <taxon>Pseudomonadati</taxon>
        <taxon>Thermodesulfobacteriota</taxon>
        <taxon>Desulfuromonadia</taxon>
        <taxon>Geobacterales</taxon>
        <taxon>Geobacteraceae</taxon>
        <taxon>Citrifermentans</taxon>
    </lineage>
</organism>